<protein>
    <recommendedName>
        <fullName evidence="8">Mitochondrial brown fat uncoupling protein 1</fullName>
        <shortName evidence="8">UCP 1</shortName>
    </recommendedName>
    <alternativeName>
        <fullName evidence="4">Solute carrier family 25 member 7</fullName>
    </alternativeName>
    <alternativeName>
        <fullName evidence="1">Thermogenin</fullName>
    </alternativeName>
</protein>
<keyword id="KW-0407">Ion channel</keyword>
<keyword id="KW-0406">Ion transport</keyword>
<keyword id="KW-0472">Membrane</keyword>
<keyword id="KW-0496">Mitochondrion</keyword>
<keyword id="KW-0999">Mitochondrion inner membrane</keyword>
<keyword id="KW-0558">Oxidation</keyword>
<keyword id="KW-0677">Repeat</keyword>
<keyword id="KW-0812">Transmembrane</keyword>
<keyword id="KW-1133">Transmembrane helix</keyword>
<keyword id="KW-0813">Transport</keyword>
<feature type="chain" id="PRO_0000281851" description="Mitochondrial brown fat uncoupling protein 1">
    <location>
        <begin position="1"/>
        <end position="306"/>
    </location>
</feature>
<feature type="topological domain" description="Mitochondrial intermembrane" evidence="2">
    <location>
        <begin position="1"/>
        <end position="10"/>
    </location>
</feature>
<feature type="transmembrane region" description="Helical; Name=1" evidence="6">
    <location>
        <begin position="11"/>
        <end position="32"/>
    </location>
</feature>
<feature type="topological domain" description="Mitochondrial matrix" evidence="2">
    <location>
        <begin position="33"/>
        <end position="73"/>
    </location>
</feature>
<feature type="transmembrane region" description="Helical; Name=2" evidence="6">
    <location>
        <begin position="74"/>
        <end position="96"/>
    </location>
</feature>
<feature type="topological domain" description="Mitochondrial intermembrane" evidence="2">
    <location>
        <begin position="97"/>
        <end position="115"/>
    </location>
</feature>
<feature type="transmembrane region" description="Helical; Name=3" evidence="6">
    <location>
        <begin position="116"/>
        <end position="132"/>
    </location>
</feature>
<feature type="topological domain" description="Mitochondrial matrix" evidence="2">
    <location>
        <begin position="133"/>
        <end position="177"/>
    </location>
</feature>
<feature type="transmembrane region" description="Helical; Name=4" evidence="6">
    <location>
        <begin position="178"/>
        <end position="194"/>
    </location>
</feature>
<feature type="topological domain" description="Mitochondrial intermembrane" evidence="2">
    <location>
        <begin position="195"/>
        <end position="211"/>
    </location>
</feature>
<feature type="transmembrane region" description="Helical; Name=5" evidence="6">
    <location>
        <begin position="212"/>
        <end position="231"/>
    </location>
</feature>
<feature type="topological domain" description="Mitochondrial matrix" evidence="2">
    <location>
        <begin position="232"/>
        <end position="265"/>
    </location>
</feature>
<feature type="transmembrane region" description="Helical; Name=6" evidence="6">
    <location>
        <begin position="266"/>
        <end position="288"/>
    </location>
</feature>
<feature type="topological domain" description="Mitochondrial intermembrane" evidence="2">
    <location>
        <begin position="289"/>
        <end position="306"/>
    </location>
</feature>
<feature type="repeat" description="Solcar 1">
    <location>
        <begin position="11"/>
        <end position="102"/>
    </location>
</feature>
<feature type="repeat" description="Solcar 2">
    <location>
        <begin position="110"/>
        <end position="200"/>
    </location>
</feature>
<feature type="repeat" description="Solcar 3">
    <location>
        <begin position="209"/>
        <end position="294"/>
    </location>
</feature>
<feature type="binding site" evidence="4">
    <location>
        <position position="56"/>
    </location>
    <ligand>
        <name>fatty acid 16:0</name>
        <dbReference type="ChEBI" id="CHEBI:78123"/>
    </ligand>
</feature>
<feature type="binding site" evidence="4">
    <location>
        <position position="268"/>
    </location>
    <ligand>
        <name>fatty acid 16:0</name>
        <dbReference type="ChEBI" id="CHEBI:78123"/>
    </ligand>
</feature>
<feature type="modified residue" description="Cysteine sulfenic acid (-SOH)" evidence="3">
    <location>
        <position position="253"/>
    </location>
</feature>
<gene>
    <name evidence="7" type="primary">UCP1</name>
    <name evidence="4" type="synonym">SLC25A7</name>
</gene>
<name>UCP1_OCHDA</name>
<organism>
    <name type="scientific">Ochotona dauurica</name>
    <name type="common">Daurian pika</name>
    <dbReference type="NCBI Taxonomy" id="130827"/>
    <lineage>
        <taxon>Eukaryota</taxon>
        <taxon>Metazoa</taxon>
        <taxon>Chordata</taxon>
        <taxon>Craniata</taxon>
        <taxon>Vertebrata</taxon>
        <taxon>Euteleostomi</taxon>
        <taxon>Mammalia</taxon>
        <taxon>Eutheria</taxon>
        <taxon>Euarchontoglires</taxon>
        <taxon>Glires</taxon>
        <taxon>Lagomorpha</taxon>
        <taxon>Ochotonidae</taxon>
        <taxon>Ochotona</taxon>
    </lineage>
</organism>
<accession>A0PC02</accession>
<reference key="1">
    <citation type="submission" date="2006-11" db="EMBL/GenBank/DDBJ databases">
        <title>Ochotona daurica uncoupling protein 1 (UCP1) mRNA, complete CDS.</title>
        <authorList>
            <person name="Kitao N."/>
            <person name="Yahata H."/>
            <person name="Matsumoto T."/>
            <person name="Okamastu Y.O."/>
            <person name="Omachi A."/>
            <person name="Saito M."/>
            <person name="Kimura K."/>
        </authorList>
    </citation>
    <scope>NUCLEOTIDE SEQUENCE [MRNA]</scope>
</reference>
<dbReference type="EMBL" id="AB283043">
    <property type="protein sequence ID" value="BAF37006.1"/>
    <property type="molecule type" value="mRNA"/>
</dbReference>
<dbReference type="SMR" id="A0PC02"/>
<dbReference type="GO" id="GO:0005743">
    <property type="term" value="C:mitochondrial inner membrane"/>
    <property type="evidence" value="ECO:0000250"/>
    <property type="project" value="UniProtKB"/>
</dbReference>
<dbReference type="GO" id="GO:1901612">
    <property type="term" value="F:cardiolipin binding"/>
    <property type="evidence" value="ECO:0000250"/>
    <property type="project" value="UniProtKB"/>
</dbReference>
<dbReference type="GO" id="GO:0036041">
    <property type="term" value="F:long-chain fatty acid binding"/>
    <property type="evidence" value="ECO:0000250"/>
    <property type="project" value="UniProtKB"/>
</dbReference>
<dbReference type="GO" id="GO:0017077">
    <property type="term" value="F:oxidative phosphorylation uncoupler activity"/>
    <property type="evidence" value="ECO:0000250"/>
    <property type="project" value="UniProtKB"/>
</dbReference>
<dbReference type="GO" id="GO:0032555">
    <property type="term" value="F:purine ribonucleotide binding"/>
    <property type="evidence" value="ECO:0000250"/>
    <property type="project" value="UniProtKB"/>
</dbReference>
<dbReference type="GO" id="GO:1990845">
    <property type="term" value="P:adaptive thermogenesis"/>
    <property type="evidence" value="ECO:0000250"/>
    <property type="project" value="UniProtKB"/>
</dbReference>
<dbReference type="GO" id="GO:0071398">
    <property type="term" value="P:cellular response to fatty acid"/>
    <property type="evidence" value="ECO:0000250"/>
    <property type="project" value="UniProtKB"/>
</dbReference>
<dbReference type="GO" id="GO:0032870">
    <property type="term" value="P:cellular response to hormone stimulus"/>
    <property type="evidence" value="ECO:0000250"/>
    <property type="project" value="UniProtKB"/>
</dbReference>
<dbReference type="GO" id="GO:0034614">
    <property type="term" value="P:cellular response to reactive oxygen species"/>
    <property type="evidence" value="ECO:0000250"/>
    <property type="project" value="UniProtKB"/>
</dbReference>
<dbReference type="GO" id="GO:1990542">
    <property type="term" value="P:mitochondrial transmembrane transport"/>
    <property type="evidence" value="ECO:0000250"/>
    <property type="project" value="UniProtKB"/>
</dbReference>
<dbReference type="GO" id="GO:1902600">
    <property type="term" value="P:proton transmembrane transport"/>
    <property type="evidence" value="ECO:0000250"/>
    <property type="project" value="UniProtKB"/>
</dbReference>
<dbReference type="GO" id="GO:1903426">
    <property type="term" value="P:regulation of reactive oxygen species biosynthetic process"/>
    <property type="evidence" value="ECO:0000250"/>
    <property type="project" value="UniProtKB"/>
</dbReference>
<dbReference type="GO" id="GO:0031667">
    <property type="term" value="P:response to nutrient levels"/>
    <property type="evidence" value="ECO:0000250"/>
    <property type="project" value="UniProtKB"/>
</dbReference>
<dbReference type="GO" id="GO:0009266">
    <property type="term" value="P:response to temperature stimulus"/>
    <property type="evidence" value="ECO:0000250"/>
    <property type="project" value="UniProtKB"/>
</dbReference>
<dbReference type="FunFam" id="1.50.40.10:FF:000068">
    <property type="entry name" value="Mitochondrial brown fat uncoupling protein 1"/>
    <property type="match status" value="1"/>
</dbReference>
<dbReference type="Gene3D" id="1.50.40.10">
    <property type="entry name" value="Mitochondrial carrier domain"/>
    <property type="match status" value="1"/>
</dbReference>
<dbReference type="InterPro" id="IPR002067">
    <property type="entry name" value="Mit_carrier"/>
</dbReference>
<dbReference type="InterPro" id="IPR050391">
    <property type="entry name" value="Mito_Metabolite_Transporter"/>
</dbReference>
<dbReference type="InterPro" id="IPR018108">
    <property type="entry name" value="Mitochondrial_sb/sol_carrier"/>
</dbReference>
<dbReference type="InterPro" id="IPR023395">
    <property type="entry name" value="Mt_carrier_dom_sf"/>
</dbReference>
<dbReference type="PANTHER" id="PTHR45618">
    <property type="entry name" value="MITOCHONDRIAL DICARBOXYLATE CARRIER-RELATED"/>
    <property type="match status" value="1"/>
</dbReference>
<dbReference type="Pfam" id="PF00153">
    <property type="entry name" value="Mito_carr"/>
    <property type="match status" value="3"/>
</dbReference>
<dbReference type="PRINTS" id="PR00784">
    <property type="entry name" value="MTUNCOUPLING"/>
</dbReference>
<dbReference type="SUPFAM" id="SSF103506">
    <property type="entry name" value="Mitochondrial carrier"/>
    <property type="match status" value="1"/>
</dbReference>
<dbReference type="PROSITE" id="PS50920">
    <property type="entry name" value="SOLCAR"/>
    <property type="match status" value="3"/>
</dbReference>
<evidence type="ECO:0000250" key="1">
    <source>
        <dbReference type="UniProtKB" id="P04575"/>
    </source>
</evidence>
<evidence type="ECO:0000250" key="2">
    <source>
        <dbReference type="UniProtKB" id="P04633"/>
    </source>
</evidence>
<evidence type="ECO:0000250" key="3">
    <source>
        <dbReference type="UniProtKB" id="P12242"/>
    </source>
</evidence>
<evidence type="ECO:0000250" key="4">
    <source>
        <dbReference type="UniProtKB" id="P25874"/>
    </source>
</evidence>
<evidence type="ECO:0000250" key="5">
    <source>
        <dbReference type="UniProtKB" id="W5PSH7"/>
    </source>
</evidence>
<evidence type="ECO:0000255" key="6"/>
<evidence type="ECO:0000303" key="7">
    <source ref="1"/>
</evidence>
<evidence type="ECO:0000305" key="8"/>
<proteinExistence type="evidence at transcript level"/>
<comment type="function">
    <text evidence="3">Mitochondrial protein responsible for thermogenic respiration, a specialized capacity of brown adipose tissue and beige fat that participates in non-shivering adaptive thermogenesis to temperature and diet variations and more generally to the regulation of energy balance. Functions as a long-chain fatty acid/LCFA and proton symporter, simultaneously transporting one LCFA and one proton through the inner mitochondrial membrane. However, LCFAs remaining associated with the transporter via their hydrophobic tails, it results in an apparent transport of protons activated by LCFAs. Thereby, dissipates the mitochondrial proton gradient and converts the energy of substrate oxydation into heat instead of ATP. Regulates the production of reactive oxygen species/ROS by mitochondria.</text>
</comment>
<comment type="catalytic activity">
    <reaction evidence="4">
        <text>H(+)(in) = H(+)(out)</text>
        <dbReference type="Rhea" id="RHEA:34979"/>
        <dbReference type="ChEBI" id="CHEBI:15378"/>
    </reaction>
</comment>
<comment type="activity regulation">
    <text evidence="3">Has no constitutive proton transporter activity and has to be activated by long-chain fatty acids/LCFAs. Inhibited by purine nucleotides. Both purine nucleotides and LCFAs bind the cytosolic side of the transporter and directly compete to activate or inhibit it. Activated by noradrenaline and reactive oxygen species. Despite lacking canonical translational encoding for selenocysteine, a small pool of the protein has been observed to selectively incorporate selenocysteine at 'Cys-253'. Selenocysteine-modified protein is highly sensitive to redox modification and may constitute a pool of protein highly sensitive to activation by elevated levels of reactive oxygen species (ROS).</text>
</comment>
<comment type="subunit">
    <text evidence="4 5">Most probably functions as a monomer. Binds one purine nucleotide per monomer. However, has also been suggested to function as a homodimer or a homotetramer. Tightly associates with cardiolipin in the mitochondrion inner membrane; may stabilize and regulate its activity.</text>
</comment>
<comment type="subcellular location">
    <subcellularLocation>
        <location evidence="3">Mitochondrion inner membrane</location>
        <topology evidence="2">Multi-pass membrane protein</topology>
    </subcellularLocation>
</comment>
<comment type="PTM">
    <text evidence="3">May undergo sulfenylation upon cold exposure. May increase the sensitivity of UCP1 thermogenic function to the activation by noradrenaline probably through structural effects.</text>
</comment>
<comment type="PTM">
    <text evidence="2">May undergo ubiquitin-mediated proteasomal degradation.</text>
</comment>
<comment type="similarity">
    <text evidence="8">Belongs to the mitochondrial carrier (TC 2.A.29) family.</text>
</comment>
<sequence>MVGTTATDVAPTMGVKIFSAGVAACLADVITFPLDTAKVRLQIQGECQTTSGIRYKGVLGTITTLAKTEGPLKLYSGLPAGLQRQISFASLRIGLYDTVQEFWGGEEATPSLRSKICAGLTTGGVAVFIGQPTEVVKVRLQAQSHLHGLKPRYTGTYNAYRIIATTESLSTLWKGTTPNLLRNIIINCTELVTYDLMKGALVRNDILADDVPCHLLSALIAGFCTTLLSSPVDVVKTRFINSPQGQYTSVPSCAMSMLTKEGPTAFFKGFAPSFLRLASWNVIMFVCFEKLKRELMKSRQTVDCAT</sequence>